<evidence type="ECO:0000255" key="1">
    <source>
        <dbReference type="HAMAP-Rule" id="MF_00101"/>
    </source>
</evidence>
<organism>
    <name type="scientific">Vibrio cholerae serotype O1 (strain M66-2)</name>
    <dbReference type="NCBI Taxonomy" id="579112"/>
    <lineage>
        <taxon>Bacteria</taxon>
        <taxon>Pseudomonadati</taxon>
        <taxon>Pseudomonadota</taxon>
        <taxon>Gammaproteobacteria</taxon>
        <taxon>Vibrionales</taxon>
        <taxon>Vibrionaceae</taxon>
        <taxon>Vibrio</taxon>
    </lineage>
</organism>
<sequence length="126" mass="13857">MIVGLGTDIAEIERVEKALARSGENFARRILTDSELEQFHASKQQGRFLAKRFAAKEAASKALGTGIAQGVTFHDFTISHDKLGKPLLILSGQAAELASQLQVENIHLSISDERHYAMATVILERR</sequence>
<gene>
    <name evidence="1" type="primary">acpS</name>
    <name type="ordered locus">VCM66_2380</name>
</gene>
<name>ACPS_VIBCM</name>
<accession>C3LR00</accession>
<keyword id="KW-0963">Cytoplasm</keyword>
<keyword id="KW-0275">Fatty acid biosynthesis</keyword>
<keyword id="KW-0276">Fatty acid metabolism</keyword>
<keyword id="KW-0444">Lipid biosynthesis</keyword>
<keyword id="KW-0443">Lipid metabolism</keyword>
<keyword id="KW-0460">Magnesium</keyword>
<keyword id="KW-0479">Metal-binding</keyword>
<keyword id="KW-0808">Transferase</keyword>
<reference key="1">
    <citation type="journal article" date="2008" name="PLoS ONE">
        <title>A recalibrated molecular clock and independent origins for the cholera pandemic clones.</title>
        <authorList>
            <person name="Feng L."/>
            <person name="Reeves P.R."/>
            <person name="Lan R."/>
            <person name="Ren Y."/>
            <person name="Gao C."/>
            <person name="Zhou Z."/>
            <person name="Ren Y."/>
            <person name="Cheng J."/>
            <person name="Wang W."/>
            <person name="Wang J."/>
            <person name="Qian W."/>
            <person name="Li D."/>
            <person name="Wang L."/>
        </authorList>
    </citation>
    <scope>NUCLEOTIDE SEQUENCE [LARGE SCALE GENOMIC DNA]</scope>
    <source>
        <strain>M66-2</strain>
    </source>
</reference>
<comment type="function">
    <text evidence="1">Transfers the 4'-phosphopantetheine moiety from coenzyme A to a Ser of acyl-carrier-protein.</text>
</comment>
<comment type="catalytic activity">
    <reaction evidence="1">
        <text>apo-[ACP] + CoA = holo-[ACP] + adenosine 3',5'-bisphosphate + H(+)</text>
        <dbReference type="Rhea" id="RHEA:12068"/>
        <dbReference type="Rhea" id="RHEA-COMP:9685"/>
        <dbReference type="Rhea" id="RHEA-COMP:9690"/>
        <dbReference type="ChEBI" id="CHEBI:15378"/>
        <dbReference type="ChEBI" id="CHEBI:29999"/>
        <dbReference type="ChEBI" id="CHEBI:57287"/>
        <dbReference type="ChEBI" id="CHEBI:58343"/>
        <dbReference type="ChEBI" id="CHEBI:64479"/>
        <dbReference type="EC" id="2.7.8.7"/>
    </reaction>
</comment>
<comment type="cofactor">
    <cofactor evidence="1">
        <name>Mg(2+)</name>
        <dbReference type="ChEBI" id="CHEBI:18420"/>
    </cofactor>
</comment>
<comment type="subcellular location">
    <subcellularLocation>
        <location evidence="1">Cytoplasm</location>
    </subcellularLocation>
</comment>
<comment type="similarity">
    <text evidence="1">Belongs to the P-Pant transferase superfamily. AcpS family.</text>
</comment>
<dbReference type="EC" id="2.7.8.7" evidence="1"/>
<dbReference type="EMBL" id="CP001233">
    <property type="protein sequence ID" value="ACP06678.1"/>
    <property type="molecule type" value="Genomic_DNA"/>
</dbReference>
<dbReference type="RefSeq" id="WP_000635063.1">
    <property type="nucleotide sequence ID" value="NC_012578.1"/>
</dbReference>
<dbReference type="SMR" id="C3LR00"/>
<dbReference type="KEGG" id="vcm:VCM66_2380"/>
<dbReference type="HOGENOM" id="CLU_089696_3_1_6"/>
<dbReference type="Proteomes" id="UP000001217">
    <property type="component" value="Chromosome I"/>
</dbReference>
<dbReference type="GO" id="GO:0005829">
    <property type="term" value="C:cytosol"/>
    <property type="evidence" value="ECO:0007669"/>
    <property type="project" value="TreeGrafter"/>
</dbReference>
<dbReference type="GO" id="GO:0008897">
    <property type="term" value="F:holo-[acyl-carrier-protein] synthase activity"/>
    <property type="evidence" value="ECO:0007669"/>
    <property type="project" value="UniProtKB-UniRule"/>
</dbReference>
<dbReference type="GO" id="GO:0000287">
    <property type="term" value="F:magnesium ion binding"/>
    <property type="evidence" value="ECO:0007669"/>
    <property type="project" value="UniProtKB-UniRule"/>
</dbReference>
<dbReference type="GO" id="GO:0006633">
    <property type="term" value="P:fatty acid biosynthetic process"/>
    <property type="evidence" value="ECO:0007669"/>
    <property type="project" value="UniProtKB-UniRule"/>
</dbReference>
<dbReference type="GO" id="GO:0019878">
    <property type="term" value="P:lysine biosynthetic process via aminoadipic acid"/>
    <property type="evidence" value="ECO:0007669"/>
    <property type="project" value="TreeGrafter"/>
</dbReference>
<dbReference type="FunFam" id="3.90.470.20:FF:000001">
    <property type="entry name" value="Holo-[acyl-carrier-protein] synthase"/>
    <property type="match status" value="1"/>
</dbReference>
<dbReference type="Gene3D" id="3.90.470.20">
    <property type="entry name" value="4'-phosphopantetheinyl transferase domain"/>
    <property type="match status" value="1"/>
</dbReference>
<dbReference type="HAMAP" id="MF_00101">
    <property type="entry name" value="AcpS"/>
    <property type="match status" value="1"/>
</dbReference>
<dbReference type="InterPro" id="IPR008278">
    <property type="entry name" value="4-PPantetheinyl_Trfase_dom"/>
</dbReference>
<dbReference type="InterPro" id="IPR037143">
    <property type="entry name" value="4-PPantetheinyl_Trfase_dom_sf"/>
</dbReference>
<dbReference type="InterPro" id="IPR002582">
    <property type="entry name" value="ACPS"/>
</dbReference>
<dbReference type="InterPro" id="IPR050559">
    <property type="entry name" value="P-Pant_transferase_sf"/>
</dbReference>
<dbReference type="InterPro" id="IPR004568">
    <property type="entry name" value="Ppantetheine-prot_Trfase_dom"/>
</dbReference>
<dbReference type="NCBIfam" id="TIGR00516">
    <property type="entry name" value="acpS"/>
    <property type="match status" value="1"/>
</dbReference>
<dbReference type="NCBIfam" id="TIGR00556">
    <property type="entry name" value="pantethn_trn"/>
    <property type="match status" value="1"/>
</dbReference>
<dbReference type="PANTHER" id="PTHR12215:SF10">
    <property type="entry name" value="L-AMINOADIPATE-SEMIALDEHYDE DEHYDROGENASE-PHOSPHOPANTETHEINYL TRANSFERASE"/>
    <property type="match status" value="1"/>
</dbReference>
<dbReference type="PANTHER" id="PTHR12215">
    <property type="entry name" value="PHOSPHOPANTETHEINE TRANSFERASE"/>
    <property type="match status" value="1"/>
</dbReference>
<dbReference type="Pfam" id="PF01648">
    <property type="entry name" value="ACPS"/>
    <property type="match status" value="1"/>
</dbReference>
<dbReference type="SUPFAM" id="SSF56214">
    <property type="entry name" value="4'-phosphopantetheinyl transferase"/>
    <property type="match status" value="1"/>
</dbReference>
<proteinExistence type="inferred from homology"/>
<protein>
    <recommendedName>
        <fullName evidence="1">Holo-[acyl-carrier-protein] synthase</fullName>
        <shortName evidence="1">Holo-ACP synthase</shortName>
        <ecNumber evidence="1">2.7.8.7</ecNumber>
    </recommendedName>
    <alternativeName>
        <fullName evidence="1">4'-phosphopantetheinyl transferase AcpS</fullName>
    </alternativeName>
</protein>
<feature type="chain" id="PRO_1000118833" description="Holo-[acyl-carrier-protein] synthase">
    <location>
        <begin position="1"/>
        <end position="126"/>
    </location>
</feature>
<feature type="binding site" evidence="1">
    <location>
        <position position="8"/>
    </location>
    <ligand>
        <name>Mg(2+)</name>
        <dbReference type="ChEBI" id="CHEBI:18420"/>
    </ligand>
</feature>
<feature type="binding site" evidence="1">
    <location>
        <position position="57"/>
    </location>
    <ligand>
        <name>Mg(2+)</name>
        <dbReference type="ChEBI" id="CHEBI:18420"/>
    </ligand>
</feature>